<proteinExistence type="predicted"/>
<name>DRUC_ECOU4</name>
<protein>
    <recommendedName>
        <fullName evidence="2">Druantia protein DruC</fullName>
    </recommendedName>
</protein>
<reference key="1">
    <citation type="submission" date="2013-07" db="EMBL/GenBank/DDBJ databases">
        <title>The Genome Sequence of Escherichia coli UMEA 4076-1.</title>
        <authorList>
            <consortium name="The Broad Institute Genome Sequencing Platform"/>
            <consortium name="The Broad Institute Genome Sequencing Center for Infectious Disease"/>
            <person name="Feldgarden M."/>
            <person name="Frimodt-Moller N."/>
            <person name="Leihof R.F."/>
            <person name="Rasmussen L."/>
            <person name="Young S.K."/>
            <person name="Zeng Q."/>
            <person name="Gargeya S."/>
            <person name="Abouelleil A."/>
            <person name="Alvarado L."/>
            <person name="Berlin A.M."/>
            <person name="Chapman S.B."/>
            <person name="Gainer-Dewar J."/>
            <person name="Goldberg J."/>
            <person name="Gnerre S."/>
            <person name="Griggs A."/>
            <person name="Gujja S."/>
            <person name="Hansen M."/>
            <person name="Howarth C."/>
            <person name="Imamovic A."/>
            <person name="Larimer J."/>
            <person name="McCowan C."/>
            <person name="Murphy C."/>
            <person name="Pearson M."/>
            <person name="Poon T."/>
            <person name="Priest M."/>
            <person name="Roberts A."/>
            <person name="Saif S."/>
            <person name="Shea T."/>
            <person name="Sykes S."/>
            <person name="Wortman J."/>
            <person name="Nusbaum C."/>
            <person name="Birren B."/>
        </authorList>
    </citation>
    <scope>NUCLEOTIDE SEQUENCE [LARGE SCALE GENOMIC DNA]</scope>
    <source>
        <strain>UMEA 4076-1</strain>
    </source>
</reference>
<reference key="2">
    <citation type="journal article" date="2018" name="Science">
        <title>Systematic discovery of antiphage defense systems in the microbial pangenome.</title>
        <authorList>
            <person name="Doron S."/>
            <person name="Melamed S."/>
            <person name="Ofir G."/>
            <person name="Leavitt A."/>
            <person name="Lopatina A."/>
            <person name="Keren M."/>
            <person name="Amitai G."/>
            <person name="Sorek R."/>
        </authorList>
    </citation>
    <scope>FUNCTION</scope>
    <scope>DISRUPTION PHENOTYPE</scope>
    <source>
        <strain>UMEA 4076-1</strain>
    </source>
</reference>
<gene>
    <name evidence="2" type="primary">druC</name>
    <name evidence="4" type="ORF">H003_04356</name>
</gene>
<comment type="function">
    <text evidence="1">Component of antiviral defense system Druantia type I, composed of DruA, DruB, DruC, DruD and DruE. Expression of Druantia in E.coli (strain MG1655) confers resistance to phage lambda, SECphi18, SECphi27 and T4.</text>
</comment>
<comment type="subcellular location">
    <subcellularLocation>
        <location evidence="3">Cytoplasm</location>
    </subcellularLocation>
</comment>
<comment type="disruption phenotype">
    <text evidence="1">When this gene is missing the Druantia system does not confer resistance to SECphi27 in E.coli.</text>
</comment>
<organism>
    <name type="scientific">Escherichia coli (strain UMEA 4076-1)</name>
    <dbReference type="NCBI Taxonomy" id="1281278"/>
    <lineage>
        <taxon>Bacteria</taxon>
        <taxon>Pseudomonadati</taxon>
        <taxon>Pseudomonadota</taxon>
        <taxon>Gammaproteobacteria</taxon>
        <taxon>Enterobacterales</taxon>
        <taxon>Enterobacteriaceae</taxon>
        <taxon>Escherichia</taxon>
    </lineage>
</organism>
<sequence>MSYQYSQEAKERISKLGQSEIVNFINEISPTLRRKAFGCLPKVPGFRAGHPTEIKEKQKRLIGYMFQSHPSSEERKAWKSFSLFWQFWAEEKIDKSFSMIDNLGLKENSGSIFIRELAKNFPKVARENIERLFIFSGFADDPDVINAFNLFPPAVVLARDIVVDTLPIRLDELEARISLIADNVEKKNNHIKELELKIDAFSERFDNYFNNEKSNLKIINELQSLINSETKQSDIANKSIDELYHFNEKNKQLILSLQEKLDFNALAMNDISEHEKLIKSMANEISELKNALTILCDNKRKNNELDYINELKKLTERIDTLEINTSQASKVSVTNRFTKFHEIAHYENYEYLSSSEDISNRISLNLQAVGLTKNSAETLARLTLATFVSGQIIQFSGSLADIIADAIAIAIGAPRYHIWRVPVGIISDMDSFDFIETIAESSRCLLLKGANLSAFEIYGAAIRDIVVQRQIHPTNYDHLALIATWKQGPATFPDGGMLAELGPVIDTDTLKMRGLSAILPQLKPGCLAKDKWTNIDGLQLDSVDDYVDELRALLDEAGFDGGTLWKRMVHIFYTSLIRVPNGNYIYDLYSVLSFYTLTWAKIKGGPVQKIEDIANRELKNYSAKISS</sequence>
<dbReference type="EMBL" id="AWEM01000032">
    <property type="protein sequence ID" value="ERA40831.1"/>
    <property type="molecule type" value="Genomic_DNA"/>
</dbReference>
<dbReference type="RefSeq" id="WP_001519245.1">
    <property type="nucleotide sequence ID" value="NZ_KE702725.1"/>
</dbReference>
<dbReference type="SMR" id="P0DW36"/>
<dbReference type="GO" id="GO:0005737">
    <property type="term" value="C:cytoplasm"/>
    <property type="evidence" value="ECO:0007669"/>
    <property type="project" value="UniProtKB-SubCell"/>
</dbReference>
<dbReference type="GO" id="GO:0051607">
    <property type="term" value="P:defense response to virus"/>
    <property type="evidence" value="ECO:0007669"/>
    <property type="project" value="UniProtKB-KW"/>
</dbReference>
<evidence type="ECO:0000269" key="1">
    <source>
    </source>
</evidence>
<evidence type="ECO:0000303" key="2">
    <source>
    </source>
</evidence>
<evidence type="ECO:0000305" key="3"/>
<evidence type="ECO:0000312" key="4">
    <source>
        <dbReference type="EMBL" id="ERA40831.1"/>
    </source>
</evidence>
<feature type="chain" id="PRO_0000456316" description="Druantia protein DruC">
    <location>
        <begin position="1"/>
        <end position="627"/>
    </location>
</feature>
<accession>P0DW36</accession>
<keyword id="KW-0051">Antiviral defense</keyword>
<keyword id="KW-0963">Cytoplasm</keyword>